<evidence type="ECO:0000255" key="1">
    <source>
        <dbReference type="HAMAP-Rule" id="MF_00514"/>
    </source>
</evidence>
<evidence type="ECO:0000305" key="2"/>
<accession>Q13WF9</accession>
<dbReference type="EMBL" id="CP000270">
    <property type="protein sequence ID" value="ABE31580.1"/>
    <property type="molecule type" value="Genomic_DNA"/>
</dbReference>
<dbReference type="RefSeq" id="WP_006052501.1">
    <property type="nucleotide sequence ID" value="NZ_CP008760.1"/>
</dbReference>
<dbReference type="SMR" id="Q13WF9"/>
<dbReference type="STRING" id="266265.Bxe_A1373"/>
<dbReference type="GeneID" id="97032991"/>
<dbReference type="KEGG" id="bxb:DR64_3535"/>
<dbReference type="KEGG" id="bxe:Bxe_A1373"/>
<dbReference type="eggNOG" id="COG0291">
    <property type="taxonomic scope" value="Bacteria"/>
</dbReference>
<dbReference type="OrthoDB" id="47476at2"/>
<dbReference type="Proteomes" id="UP000001817">
    <property type="component" value="Chromosome 1"/>
</dbReference>
<dbReference type="GO" id="GO:0022625">
    <property type="term" value="C:cytosolic large ribosomal subunit"/>
    <property type="evidence" value="ECO:0007669"/>
    <property type="project" value="TreeGrafter"/>
</dbReference>
<dbReference type="GO" id="GO:0003735">
    <property type="term" value="F:structural constituent of ribosome"/>
    <property type="evidence" value="ECO:0007669"/>
    <property type="project" value="InterPro"/>
</dbReference>
<dbReference type="GO" id="GO:0006412">
    <property type="term" value="P:translation"/>
    <property type="evidence" value="ECO:0007669"/>
    <property type="project" value="UniProtKB-UniRule"/>
</dbReference>
<dbReference type="FunFam" id="4.10.410.60:FF:000001">
    <property type="entry name" value="50S ribosomal protein L35"/>
    <property type="match status" value="1"/>
</dbReference>
<dbReference type="Gene3D" id="4.10.410.60">
    <property type="match status" value="1"/>
</dbReference>
<dbReference type="HAMAP" id="MF_00514">
    <property type="entry name" value="Ribosomal_bL35"/>
    <property type="match status" value="1"/>
</dbReference>
<dbReference type="InterPro" id="IPR001706">
    <property type="entry name" value="Ribosomal_bL35"/>
</dbReference>
<dbReference type="InterPro" id="IPR021137">
    <property type="entry name" value="Ribosomal_bL35-like"/>
</dbReference>
<dbReference type="InterPro" id="IPR018265">
    <property type="entry name" value="Ribosomal_bL35_CS"/>
</dbReference>
<dbReference type="InterPro" id="IPR037229">
    <property type="entry name" value="Ribosomal_bL35_sf"/>
</dbReference>
<dbReference type="NCBIfam" id="TIGR00001">
    <property type="entry name" value="rpmI_bact"/>
    <property type="match status" value="1"/>
</dbReference>
<dbReference type="PANTHER" id="PTHR33343">
    <property type="entry name" value="54S RIBOSOMAL PROTEIN BL35M"/>
    <property type="match status" value="1"/>
</dbReference>
<dbReference type="PANTHER" id="PTHR33343:SF1">
    <property type="entry name" value="LARGE RIBOSOMAL SUBUNIT PROTEIN BL35M"/>
    <property type="match status" value="1"/>
</dbReference>
<dbReference type="Pfam" id="PF01632">
    <property type="entry name" value="Ribosomal_L35p"/>
    <property type="match status" value="1"/>
</dbReference>
<dbReference type="PRINTS" id="PR00064">
    <property type="entry name" value="RIBOSOMALL35"/>
</dbReference>
<dbReference type="SUPFAM" id="SSF143034">
    <property type="entry name" value="L35p-like"/>
    <property type="match status" value="1"/>
</dbReference>
<dbReference type="PROSITE" id="PS00936">
    <property type="entry name" value="RIBOSOMAL_L35"/>
    <property type="match status" value="1"/>
</dbReference>
<feature type="chain" id="PRO_0000258652" description="Large ribosomal subunit protein bL35">
    <location>
        <begin position="1"/>
        <end position="65"/>
    </location>
</feature>
<comment type="similarity">
    <text evidence="1">Belongs to the bacterial ribosomal protein bL35 family.</text>
</comment>
<gene>
    <name evidence="1" type="primary">rpmI</name>
    <name type="ordered locus">Bxeno_A3043</name>
    <name type="ORF">Bxe_A1373</name>
</gene>
<sequence length="65" mass="7317">MPKMKTKKSAAKRFVVRPGGTVKRGQAFKRHILTKKTTKNKRHLRGSTAVHDSDLNSVRAMLPFA</sequence>
<name>RL35_PARXL</name>
<protein>
    <recommendedName>
        <fullName evidence="1">Large ribosomal subunit protein bL35</fullName>
    </recommendedName>
    <alternativeName>
        <fullName evidence="2">50S ribosomal protein L35</fullName>
    </alternativeName>
</protein>
<keyword id="KW-1185">Reference proteome</keyword>
<keyword id="KW-0687">Ribonucleoprotein</keyword>
<keyword id="KW-0689">Ribosomal protein</keyword>
<organism>
    <name type="scientific">Paraburkholderia xenovorans (strain LB400)</name>
    <dbReference type="NCBI Taxonomy" id="266265"/>
    <lineage>
        <taxon>Bacteria</taxon>
        <taxon>Pseudomonadati</taxon>
        <taxon>Pseudomonadota</taxon>
        <taxon>Betaproteobacteria</taxon>
        <taxon>Burkholderiales</taxon>
        <taxon>Burkholderiaceae</taxon>
        <taxon>Paraburkholderia</taxon>
    </lineage>
</organism>
<proteinExistence type="inferred from homology"/>
<reference key="1">
    <citation type="journal article" date="2006" name="Proc. Natl. Acad. Sci. U.S.A.">
        <title>Burkholderia xenovorans LB400 harbors a multi-replicon, 9.73-Mbp genome shaped for versatility.</title>
        <authorList>
            <person name="Chain P.S.G."/>
            <person name="Denef V.J."/>
            <person name="Konstantinidis K.T."/>
            <person name="Vergez L.M."/>
            <person name="Agullo L."/>
            <person name="Reyes V.L."/>
            <person name="Hauser L."/>
            <person name="Cordova M."/>
            <person name="Gomez L."/>
            <person name="Gonzalez M."/>
            <person name="Land M."/>
            <person name="Lao V."/>
            <person name="Larimer F."/>
            <person name="LiPuma J.J."/>
            <person name="Mahenthiralingam E."/>
            <person name="Malfatti S.A."/>
            <person name="Marx C.J."/>
            <person name="Parnell J.J."/>
            <person name="Ramette A."/>
            <person name="Richardson P."/>
            <person name="Seeger M."/>
            <person name="Smith D."/>
            <person name="Spilker T."/>
            <person name="Sul W.J."/>
            <person name="Tsoi T.V."/>
            <person name="Ulrich L.E."/>
            <person name="Zhulin I.B."/>
            <person name="Tiedje J.M."/>
        </authorList>
    </citation>
    <scope>NUCLEOTIDE SEQUENCE [LARGE SCALE GENOMIC DNA]</scope>
    <source>
        <strain>LB400</strain>
    </source>
</reference>